<feature type="chain" id="PRO_1000212481" description="Phosphatidylserine decarboxylase beta chain" evidence="1">
    <location>
        <begin position="1"/>
        <end position="253"/>
    </location>
</feature>
<feature type="chain" id="PRO_1000212482" description="Phosphatidylserine decarboxylase alpha chain" evidence="1">
    <location>
        <begin position="254"/>
        <end position="322"/>
    </location>
</feature>
<feature type="region of interest" description="Disordered" evidence="2">
    <location>
        <begin position="293"/>
        <end position="322"/>
    </location>
</feature>
<feature type="compositionally biased region" description="Basic and acidic residues" evidence="2">
    <location>
        <begin position="308"/>
        <end position="322"/>
    </location>
</feature>
<feature type="active site" description="Charge relay system; for autoendoproteolytic cleavage activity" evidence="1">
    <location>
        <position position="90"/>
    </location>
</feature>
<feature type="active site" description="Charge relay system; for autoendoproteolytic cleavage activity" evidence="1">
    <location>
        <position position="147"/>
    </location>
</feature>
<feature type="active site" description="Charge relay system; for autoendoproteolytic cleavage activity" evidence="1">
    <location>
        <position position="254"/>
    </location>
</feature>
<feature type="active site" description="Schiff-base intermediate with substrate; via pyruvic acid; for decarboxylase activity" evidence="1">
    <location>
        <position position="254"/>
    </location>
</feature>
<feature type="site" description="Cleavage (non-hydrolytic); by autocatalysis" evidence="1">
    <location>
        <begin position="253"/>
        <end position="254"/>
    </location>
</feature>
<feature type="modified residue" description="Pyruvic acid (Ser); by autocatalysis" evidence="1">
    <location>
        <position position="254"/>
    </location>
</feature>
<organism>
    <name type="scientific">Escherichia coli (strain K12 / MC4100 / BW2952)</name>
    <dbReference type="NCBI Taxonomy" id="595496"/>
    <lineage>
        <taxon>Bacteria</taxon>
        <taxon>Pseudomonadati</taxon>
        <taxon>Pseudomonadota</taxon>
        <taxon>Gammaproteobacteria</taxon>
        <taxon>Enterobacterales</taxon>
        <taxon>Enterobacteriaceae</taxon>
        <taxon>Escherichia</taxon>
    </lineage>
</organism>
<reference key="1">
    <citation type="journal article" date="2009" name="J. Bacteriol.">
        <title>Genomic sequencing reveals regulatory mutations and recombinational events in the widely used MC4100 lineage of Escherichia coli K-12.</title>
        <authorList>
            <person name="Ferenci T."/>
            <person name="Zhou Z."/>
            <person name="Betteridge T."/>
            <person name="Ren Y."/>
            <person name="Liu Y."/>
            <person name="Feng L."/>
            <person name="Reeves P.R."/>
            <person name="Wang L."/>
        </authorList>
    </citation>
    <scope>NUCLEOTIDE SEQUENCE [LARGE SCALE GENOMIC DNA]</scope>
    <source>
        <strain>K12 / MC4100 / BW2952</strain>
    </source>
</reference>
<evidence type="ECO:0000255" key="1">
    <source>
        <dbReference type="HAMAP-Rule" id="MF_00662"/>
    </source>
</evidence>
<evidence type="ECO:0000256" key="2">
    <source>
        <dbReference type="SAM" id="MobiDB-lite"/>
    </source>
</evidence>
<name>PSD_ECOBW</name>
<sequence length="322" mass="35934">MLNSFKLSLQYILPKLWLTRLAGWGASKRAGWLTKLVIDLFVKYYKVDMKEAQKPDTASYRTFNEFFVRPLRDEVRPIDTDPNVLVMPADGVISQLGKIEEDKILQAKGHNYSLEALLAGNYLMADLFRNGTFVTTYLSPRDYHRVHMPCNGILREMIYVPGDLFSVNHLTAQNVPNLFARNERVICLFDTEFGPMAQILVGATIVGSIETVWAGTITPPREGIIKRWTWPAGENDGSVALLKGQEMGRFKLGSTVINLFAPGKVNLVEQLESLSVTKIGQPLAVSTETFVTPDAEPAPLPAEEIEAEHDASPLVDDKKDQV</sequence>
<keyword id="KW-1003">Cell membrane</keyword>
<keyword id="KW-0210">Decarboxylase</keyword>
<keyword id="KW-0444">Lipid biosynthesis</keyword>
<keyword id="KW-0443">Lipid metabolism</keyword>
<keyword id="KW-0456">Lyase</keyword>
<keyword id="KW-0472">Membrane</keyword>
<keyword id="KW-0594">Phospholipid biosynthesis</keyword>
<keyword id="KW-1208">Phospholipid metabolism</keyword>
<keyword id="KW-0670">Pyruvate</keyword>
<keyword id="KW-0865">Zymogen</keyword>
<gene>
    <name evidence="1" type="primary">psd</name>
    <name type="ordered locus">BWG_3875</name>
</gene>
<protein>
    <recommendedName>
        <fullName evidence="1">Phosphatidylserine decarboxylase proenzyme</fullName>
        <ecNumber evidence="1">4.1.1.65</ecNumber>
    </recommendedName>
    <component>
        <recommendedName>
            <fullName evidence="1">Phosphatidylserine decarboxylase alpha chain</fullName>
        </recommendedName>
    </component>
    <component>
        <recommendedName>
            <fullName evidence="1">Phosphatidylserine decarboxylase beta chain</fullName>
        </recommendedName>
    </component>
</protein>
<dbReference type="EC" id="4.1.1.65" evidence="1"/>
<dbReference type="EMBL" id="CP001396">
    <property type="protein sequence ID" value="ACR64033.1"/>
    <property type="molecule type" value="Genomic_DNA"/>
</dbReference>
<dbReference type="SMR" id="C5A1F4"/>
<dbReference type="KEGG" id="ebw:BWG_3875"/>
<dbReference type="HOGENOM" id="CLU_029061_4_1_6"/>
<dbReference type="UniPathway" id="UPA00558">
    <property type="reaction ID" value="UER00616"/>
</dbReference>
<dbReference type="GO" id="GO:0005886">
    <property type="term" value="C:plasma membrane"/>
    <property type="evidence" value="ECO:0007669"/>
    <property type="project" value="UniProtKB-SubCell"/>
</dbReference>
<dbReference type="GO" id="GO:0004609">
    <property type="term" value="F:phosphatidylserine decarboxylase activity"/>
    <property type="evidence" value="ECO:0007669"/>
    <property type="project" value="UniProtKB-UniRule"/>
</dbReference>
<dbReference type="GO" id="GO:0006646">
    <property type="term" value="P:phosphatidylethanolamine biosynthetic process"/>
    <property type="evidence" value="ECO:0007669"/>
    <property type="project" value="UniProtKB-UniRule"/>
</dbReference>
<dbReference type="HAMAP" id="MF_00662">
    <property type="entry name" value="PS_decarb_PSD_B_type1"/>
    <property type="match status" value="1"/>
</dbReference>
<dbReference type="InterPro" id="IPR003817">
    <property type="entry name" value="PS_Dcarbxylase"/>
</dbReference>
<dbReference type="InterPro" id="IPR033177">
    <property type="entry name" value="PSD-B"/>
</dbReference>
<dbReference type="InterPro" id="IPR033178">
    <property type="entry name" value="PSD_type1_pro"/>
</dbReference>
<dbReference type="NCBIfam" id="TIGR00163">
    <property type="entry name" value="PS_decarb"/>
    <property type="match status" value="1"/>
</dbReference>
<dbReference type="PANTHER" id="PTHR10067">
    <property type="entry name" value="PHOSPHATIDYLSERINE DECARBOXYLASE"/>
    <property type="match status" value="1"/>
</dbReference>
<dbReference type="PANTHER" id="PTHR10067:SF6">
    <property type="entry name" value="PHOSPHATIDYLSERINE DECARBOXYLASE PROENZYME, MITOCHONDRIAL"/>
    <property type="match status" value="1"/>
</dbReference>
<dbReference type="Pfam" id="PF02666">
    <property type="entry name" value="PS_Dcarbxylase"/>
    <property type="match status" value="1"/>
</dbReference>
<comment type="function">
    <text evidence="1">Catalyzes the formation of phosphatidylethanolamine (PtdEtn) from phosphatidylserine (PtdSer).</text>
</comment>
<comment type="catalytic activity">
    <reaction evidence="1">
        <text>a 1,2-diacyl-sn-glycero-3-phospho-L-serine + H(+) = a 1,2-diacyl-sn-glycero-3-phosphoethanolamine + CO2</text>
        <dbReference type="Rhea" id="RHEA:20828"/>
        <dbReference type="ChEBI" id="CHEBI:15378"/>
        <dbReference type="ChEBI" id="CHEBI:16526"/>
        <dbReference type="ChEBI" id="CHEBI:57262"/>
        <dbReference type="ChEBI" id="CHEBI:64612"/>
        <dbReference type="EC" id="4.1.1.65"/>
    </reaction>
</comment>
<comment type="cofactor">
    <cofactor evidence="1">
        <name>pyruvate</name>
        <dbReference type="ChEBI" id="CHEBI:15361"/>
    </cofactor>
    <text evidence="1">Binds 1 pyruvoyl group covalently per subunit.</text>
</comment>
<comment type="pathway">
    <text evidence="1">Phospholipid metabolism; phosphatidylethanolamine biosynthesis; phosphatidylethanolamine from CDP-diacylglycerol: step 2/2.</text>
</comment>
<comment type="subunit">
    <text evidence="1">Heterodimer of a large membrane-associated beta subunit and a small pyruvoyl-containing alpha subunit.</text>
</comment>
<comment type="subcellular location">
    <subcellularLocation>
        <location evidence="1">Cell membrane</location>
        <topology evidence="1">Peripheral membrane protein</topology>
    </subcellularLocation>
</comment>
<comment type="PTM">
    <text evidence="1">Is synthesized initially as an inactive proenzyme. Formation of the active enzyme involves a self-maturation process in which the active site pyruvoyl group is generated from an internal serine residue via an autocatalytic post-translational modification. Two non-identical subunits are generated from the proenzyme in this reaction, and the pyruvate is formed at the N-terminus of the alpha chain, which is derived from the carboxyl end of the proenzyme. The autoendoproteolytic cleavage occurs by a canonical serine protease mechanism, in which the side chain hydroxyl group of the serine supplies its oxygen atom to form the C-terminus of the beta chain, while the remainder of the serine residue undergoes an oxidative deamination to produce ammonia and the pyruvoyl prosthetic group on the alpha chain. During this reaction, the Ser that is part of the protease active site of the proenzyme becomes the pyruvoyl prosthetic group, which constitutes an essential element of the active site of the mature decarboxylase.</text>
</comment>
<comment type="similarity">
    <text evidence="1">Belongs to the phosphatidylserine decarboxylase family. PSD-B subfamily. Prokaryotic type I sub-subfamily.</text>
</comment>
<proteinExistence type="inferred from homology"/>
<accession>C5A1F4</accession>